<comment type="function">
    <text evidence="1">Catalyzes the NADPH-dependent reduction of 7-cyano-7-deazaguanine (preQ0) to 7-aminomethyl-7-deazaguanine (preQ1).</text>
</comment>
<comment type="catalytic activity">
    <reaction evidence="1">
        <text>7-aminomethyl-7-carbaguanine + 2 NADP(+) = 7-cyano-7-deazaguanine + 2 NADPH + 3 H(+)</text>
        <dbReference type="Rhea" id="RHEA:13409"/>
        <dbReference type="ChEBI" id="CHEBI:15378"/>
        <dbReference type="ChEBI" id="CHEBI:45075"/>
        <dbReference type="ChEBI" id="CHEBI:57783"/>
        <dbReference type="ChEBI" id="CHEBI:58349"/>
        <dbReference type="ChEBI" id="CHEBI:58703"/>
        <dbReference type="EC" id="1.7.1.13"/>
    </reaction>
</comment>
<comment type="pathway">
    <text evidence="1">tRNA modification; tRNA-queuosine biosynthesis.</text>
</comment>
<comment type="subunit">
    <text evidence="1">Homodimer.</text>
</comment>
<comment type="subcellular location">
    <subcellularLocation>
        <location evidence="1">Cytoplasm</location>
    </subcellularLocation>
</comment>
<comment type="similarity">
    <text evidence="1">Belongs to the GTP cyclohydrolase I family. QueF type 2 subfamily.</text>
</comment>
<accession>Q2NYB8</accession>
<sequence length="271" mass="29714">MNTPEDSTLGREVAYPSGYDPSLLFPIPRAAGREAIGLTGALPFTGRDRWHAYELSWLDAHGKPCVATATLHVPHDSPALIESKSLKLYLNSLNATRFNSAEAVRTRIVTDLSTRAGADVSVEFGLPPIDGVGDGESIDALDVSIDDYGPPNAAYLTAQAQPVVEEVLTSALLKSNCPVTGQPDWASVTLHYRGAPIEREGLLRYLVSFRDHAEFHEQCVERIFHDVLLRCAPEWLVVEARYTRRGGLDINPLRSSLSVPAPLSVFRDLRQ</sequence>
<feature type="chain" id="PRO_0000247725" description="NADPH-dependent 7-cyano-7-deazaguanine reductase">
    <location>
        <begin position="1"/>
        <end position="271"/>
    </location>
</feature>
<feature type="active site" description="Thioimide intermediate" evidence="1">
    <location>
        <position position="177"/>
    </location>
</feature>
<feature type="active site" description="Proton donor" evidence="1">
    <location>
        <position position="184"/>
    </location>
</feature>
<feature type="binding site" evidence="1">
    <location>
        <begin position="81"/>
        <end position="83"/>
    </location>
    <ligand>
        <name>substrate</name>
    </ligand>
</feature>
<feature type="binding site" evidence="1">
    <location>
        <begin position="83"/>
        <end position="84"/>
    </location>
    <ligand>
        <name>NADPH</name>
        <dbReference type="ChEBI" id="CHEBI:57783"/>
    </ligand>
</feature>
<feature type="binding site" evidence="1">
    <location>
        <begin position="216"/>
        <end position="217"/>
    </location>
    <ligand>
        <name>substrate</name>
    </ligand>
</feature>
<feature type="binding site" evidence="1">
    <location>
        <begin position="245"/>
        <end position="246"/>
    </location>
    <ligand>
        <name>NADPH</name>
        <dbReference type="ChEBI" id="CHEBI:57783"/>
    </ligand>
</feature>
<dbReference type="EC" id="1.7.1.13" evidence="1"/>
<dbReference type="EMBL" id="AP008229">
    <property type="protein sequence ID" value="BAE70709.1"/>
    <property type="molecule type" value="Genomic_DNA"/>
</dbReference>
<dbReference type="RefSeq" id="WP_011260517.1">
    <property type="nucleotide sequence ID" value="NC_007705.1"/>
</dbReference>
<dbReference type="SMR" id="Q2NYB8"/>
<dbReference type="KEGG" id="xom:XOO3954"/>
<dbReference type="HOGENOM" id="CLU_054738_0_0_6"/>
<dbReference type="UniPathway" id="UPA00392"/>
<dbReference type="GO" id="GO:0005737">
    <property type="term" value="C:cytoplasm"/>
    <property type="evidence" value="ECO:0007669"/>
    <property type="project" value="UniProtKB-SubCell"/>
</dbReference>
<dbReference type="GO" id="GO:0033739">
    <property type="term" value="F:preQ1 synthase activity"/>
    <property type="evidence" value="ECO:0007669"/>
    <property type="project" value="UniProtKB-UniRule"/>
</dbReference>
<dbReference type="GO" id="GO:0008616">
    <property type="term" value="P:queuosine biosynthetic process"/>
    <property type="evidence" value="ECO:0007669"/>
    <property type="project" value="UniProtKB-UniRule"/>
</dbReference>
<dbReference type="GO" id="GO:0006400">
    <property type="term" value="P:tRNA modification"/>
    <property type="evidence" value="ECO:0007669"/>
    <property type="project" value="UniProtKB-UniRule"/>
</dbReference>
<dbReference type="Gene3D" id="3.30.1130.10">
    <property type="match status" value="2"/>
</dbReference>
<dbReference type="HAMAP" id="MF_00817">
    <property type="entry name" value="QueF_type2"/>
    <property type="match status" value="1"/>
</dbReference>
<dbReference type="InterPro" id="IPR043133">
    <property type="entry name" value="GTP-CH-I_C/QueF"/>
</dbReference>
<dbReference type="InterPro" id="IPR050084">
    <property type="entry name" value="NADPH_dep_7-cyano-7-deazaG_red"/>
</dbReference>
<dbReference type="InterPro" id="IPR029500">
    <property type="entry name" value="QueF"/>
</dbReference>
<dbReference type="InterPro" id="IPR029139">
    <property type="entry name" value="QueF_N"/>
</dbReference>
<dbReference type="InterPro" id="IPR016428">
    <property type="entry name" value="QueF_type2"/>
</dbReference>
<dbReference type="NCBIfam" id="TIGR03138">
    <property type="entry name" value="QueF"/>
    <property type="match status" value="1"/>
</dbReference>
<dbReference type="PANTHER" id="PTHR34354">
    <property type="entry name" value="NADPH-DEPENDENT 7-CYANO-7-DEAZAGUANINE REDUCTASE"/>
    <property type="match status" value="1"/>
</dbReference>
<dbReference type="PANTHER" id="PTHR34354:SF1">
    <property type="entry name" value="NADPH-DEPENDENT 7-CYANO-7-DEAZAGUANINE REDUCTASE"/>
    <property type="match status" value="1"/>
</dbReference>
<dbReference type="Pfam" id="PF14489">
    <property type="entry name" value="QueF"/>
    <property type="match status" value="1"/>
</dbReference>
<dbReference type="Pfam" id="PF14819">
    <property type="entry name" value="QueF_N"/>
    <property type="match status" value="1"/>
</dbReference>
<dbReference type="PIRSF" id="PIRSF004750">
    <property type="entry name" value="Nitrile_oxidored_YqcD_prd"/>
    <property type="match status" value="1"/>
</dbReference>
<dbReference type="SUPFAM" id="SSF55620">
    <property type="entry name" value="Tetrahydrobiopterin biosynthesis enzymes-like"/>
    <property type="match status" value="1"/>
</dbReference>
<evidence type="ECO:0000255" key="1">
    <source>
        <dbReference type="HAMAP-Rule" id="MF_00817"/>
    </source>
</evidence>
<proteinExistence type="inferred from homology"/>
<name>QUEF_XANOM</name>
<organism>
    <name type="scientific">Xanthomonas oryzae pv. oryzae (strain MAFF 311018)</name>
    <dbReference type="NCBI Taxonomy" id="342109"/>
    <lineage>
        <taxon>Bacteria</taxon>
        <taxon>Pseudomonadati</taxon>
        <taxon>Pseudomonadota</taxon>
        <taxon>Gammaproteobacteria</taxon>
        <taxon>Lysobacterales</taxon>
        <taxon>Lysobacteraceae</taxon>
        <taxon>Xanthomonas</taxon>
    </lineage>
</organism>
<gene>
    <name evidence="1" type="primary">queF</name>
    <name type="ordered locus">XOO3954</name>
</gene>
<protein>
    <recommendedName>
        <fullName evidence="1">NADPH-dependent 7-cyano-7-deazaguanine reductase</fullName>
        <ecNumber evidence="1">1.7.1.13</ecNumber>
    </recommendedName>
    <alternativeName>
        <fullName evidence="1">7-cyano-7-carbaguanine reductase</fullName>
    </alternativeName>
    <alternativeName>
        <fullName evidence="1">NADPH-dependent nitrile oxidoreductase</fullName>
    </alternativeName>
    <alternativeName>
        <fullName evidence="1">PreQ(0) reductase</fullName>
    </alternativeName>
</protein>
<keyword id="KW-0963">Cytoplasm</keyword>
<keyword id="KW-0521">NADP</keyword>
<keyword id="KW-0560">Oxidoreductase</keyword>
<keyword id="KW-0671">Queuosine biosynthesis</keyword>
<reference key="1">
    <citation type="journal article" date="2005" name="Jpn. Agric. Res. Q.">
        <title>Genome sequence of Xanthomonas oryzae pv. oryzae suggests contribution of large numbers of effector genes and insertion sequences to its race diversity.</title>
        <authorList>
            <person name="Ochiai H."/>
            <person name="Inoue Y."/>
            <person name="Takeya M."/>
            <person name="Sasaki A."/>
            <person name="Kaku H."/>
        </authorList>
    </citation>
    <scope>NUCLEOTIDE SEQUENCE [LARGE SCALE GENOMIC DNA]</scope>
    <source>
        <strain>MAFF 311018</strain>
    </source>
</reference>